<organism>
    <name type="scientific">Burkholderia cenocepacia (strain ATCC BAA-245 / DSM 16553 / LMG 16656 / NCTC 13227 / J2315 / CF5610)</name>
    <name type="common">Burkholderia cepacia (strain J2315)</name>
    <dbReference type="NCBI Taxonomy" id="216591"/>
    <lineage>
        <taxon>Bacteria</taxon>
        <taxon>Pseudomonadati</taxon>
        <taxon>Pseudomonadota</taxon>
        <taxon>Betaproteobacteria</taxon>
        <taxon>Burkholderiales</taxon>
        <taxon>Burkholderiaceae</taxon>
        <taxon>Burkholderia</taxon>
        <taxon>Burkholderia cepacia complex</taxon>
    </lineage>
</organism>
<keyword id="KW-0963">Cytoplasm</keyword>
<keyword id="KW-0324">Glycolysis</keyword>
<keyword id="KW-0456">Lyase</keyword>
<keyword id="KW-0460">Magnesium</keyword>
<keyword id="KW-0479">Metal-binding</keyword>
<keyword id="KW-0964">Secreted</keyword>
<gene>
    <name evidence="1" type="primary">eno</name>
    <name type="ordered locus">BceJ2315_21420</name>
    <name type="ORF">BCAL2179</name>
</gene>
<proteinExistence type="inferred from homology"/>
<sequence>MSAIVDIIGREILDSRGNPTVECDVLLESGTMGRAAVPSGASTGSREAIELRDGEAGRYNGKGVLKAVEHINTEISEAIMGLDASEQAFLDKTLLELDGTDNKSRLGANAMLAVSMAVAKAAAEEAGLPLYRYFGGSGAMQLPVPMMNIVNGGAHANNSLDIQEFMIVPVSQPTFREALRCGAEVFHALKKILSDRGMSTAVGDEGGFAPNFGSNDECLSTILQAIEKAGYRAGEDVLLALDCAASEFYHDGKYQLAGEGLQLSSAEFTDYLATLADKFPIVSIEDGMHESDWDGWKLLTDRLGKKVQLVGDDLFVTNTRILKEGIEKGIANSILIKINQIGTLTETFAAIEMAKRAGYTAVISHRSGETEDSTIADIAVGLNAGQIKTGSLSRSDRISKYNQLLRIEEDLGDIASYPGKSAFYNLR</sequence>
<name>ENO_BURCJ</name>
<dbReference type="EC" id="4.2.1.11" evidence="1"/>
<dbReference type="EMBL" id="AM747720">
    <property type="protein sequence ID" value="CAR52480.1"/>
    <property type="molecule type" value="Genomic_DNA"/>
</dbReference>
<dbReference type="RefSeq" id="WP_006478406.1">
    <property type="nucleotide sequence ID" value="NC_011000.1"/>
</dbReference>
<dbReference type="SMR" id="B4EDA1"/>
<dbReference type="GeneID" id="93128338"/>
<dbReference type="KEGG" id="bcj:BCAL2179"/>
<dbReference type="eggNOG" id="COG0148">
    <property type="taxonomic scope" value="Bacteria"/>
</dbReference>
<dbReference type="HOGENOM" id="CLU_031223_2_1_4"/>
<dbReference type="BioCyc" id="BCEN216591:G1G1V-2394-MONOMER"/>
<dbReference type="UniPathway" id="UPA00109">
    <property type="reaction ID" value="UER00187"/>
</dbReference>
<dbReference type="Proteomes" id="UP000001035">
    <property type="component" value="Chromosome 1"/>
</dbReference>
<dbReference type="GO" id="GO:0009986">
    <property type="term" value="C:cell surface"/>
    <property type="evidence" value="ECO:0007669"/>
    <property type="project" value="UniProtKB-SubCell"/>
</dbReference>
<dbReference type="GO" id="GO:0005576">
    <property type="term" value="C:extracellular region"/>
    <property type="evidence" value="ECO:0007669"/>
    <property type="project" value="UniProtKB-SubCell"/>
</dbReference>
<dbReference type="GO" id="GO:0000015">
    <property type="term" value="C:phosphopyruvate hydratase complex"/>
    <property type="evidence" value="ECO:0007669"/>
    <property type="project" value="InterPro"/>
</dbReference>
<dbReference type="GO" id="GO:0000287">
    <property type="term" value="F:magnesium ion binding"/>
    <property type="evidence" value="ECO:0007669"/>
    <property type="project" value="UniProtKB-UniRule"/>
</dbReference>
<dbReference type="GO" id="GO:0004634">
    <property type="term" value="F:phosphopyruvate hydratase activity"/>
    <property type="evidence" value="ECO:0007669"/>
    <property type="project" value="UniProtKB-UniRule"/>
</dbReference>
<dbReference type="GO" id="GO:0006096">
    <property type="term" value="P:glycolytic process"/>
    <property type="evidence" value="ECO:0007669"/>
    <property type="project" value="UniProtKB-UniRule"/>
</dbReference>
<dbReference type="CDD" id="cd03313">
    <property type="entry name" value="enolase"/>
    <property type="match status" value="1"/>
</dbReference>
<dbReference type="FunFam" id="3.20.20.120:FF:000001">
    <property type="entry name" value="Enolase"/>
    <property type="match status" value="1"/>
</dbReference>
<dbReference type="FunFam" id="3.30.390.10:FF:000001">
    <property type="entry name" value="Enolase"/>
    <property type="match status" value="1"/>
</dbReference>
<dbReference type="Gene3D" id="3.20.20.120">
    <property type="entry name" value="Enolase-like C-terminal domain"/>
    <property type="match status" value="1"/>
</dbReference>
<dbReference type="Gene3D" id="3.30.390.10">
    <property type="entry name" value="Enolase-like, N-terminal domain"/>
    <property type="match status" value="1"/>
</dbReference>
<dbReference type="HAMAP" id="MF_00318">
    <property type="entry name" value="Enolase"/>
    <property type="match status" value="1"/>
</dbReference>
<dbReference type="InterPro" id="IPR000941">
    <property type="entry name" value="Enolase"/>
</dbReference>
<dbReference type="InterPro" id="IPR036849">
    <property type="entry name" value="Enolase-like_C_sf"/>
</dbReference>
<dbReference type="InterPro" id="IPR029017">
    <property type="entry name" value="Enolase-like_N"/>
</dbReference>
<dbReference type="InterPro" id="IPR020810">
    <property type="entry name" value="Enolase_C"/>
</dbReference>
<dbReference type="InterPro" id="IPR020809">
    <property type="entry name" value="Enolase_CS"/>
</dbReference>
<dbReference type="InterPro" id="IPR020811">
    <property type="entry name" value="Enolase_N"/>
</dbReference>
<dbReference type="NCBIfam" id="TIGR01060">
    <property type="entry name" value="eno"/>
    <property type="match status" value="1"/>
</dbReference>
<dbReference type="PANTHER" id="PTHR11902">
    <property type="entry name" value="ENOLASE"/>
    <property type="match status" value="1"/>
</dbReference>
<dbReference type="PANTHER" id="PTHR11902:SF1">
    <property type="entry name" value="ENOLASE"/>
    <property type="match status" value="1"/>
</dbReference>
<dbReference type="Pfam" id="PF00113">
    <property type="entry name" value="Enolase_C"/>
    <property type="match status" value="1"/>
</dbReference>
<dbReference type="Pfam" id="PF03952">
    <property type="entry name" value="Enolase_N"/>
    <property type="match status" value="1"/>
</dbReference>
<dbReference type="PIRSF" id="PIRSF001400">
    <property type="entry name" value="Enolase"/>
    <property type="match status" value="1"/>
</dbReference>
<dbReference type="PRINTS" id="PR00148">
    <property type="entry name" value="ENOLASE"/>
</dbReference>
<dbReference type="SFLD" id="SFLDF00002">
    <property type="entry name" value="enolase"/>
    <property type="match status" value="1"/>
</dbReference>
<dbReference type="SFLD" id="SFLDG00178">
    <property type="entry name" value="enolase"/>
    <property type="match status" value="1"/>
</dbReference>
<dbReference type="SMART" id="SM01192">
    <property type="entry name" value="Enolase_C"/>
    <property type="match status" value="1"/>
</dbReference>
<dbReference type="SMART" id="SM01193">
    <property type="entry name" value="Enolase_N"/>
    <property type="match status" value="1"/>
</dbReference>
<dbReference type="SUPFAM" id="SSF51604">
    <property type="entry name" value="Enolase C-terminal domain-like"/>
    <property type="match status" value="1"/>
</dbReference>
<dbReference type="SUPFAM" id="SSF54826">
    <property type="entry name" value="Enolase N-terminal domain-like"/>
    <property type="match status" value="1"/>
</dbReference>
<dbReference type="PROSITE" id="PS00164">
    <property type="entry name" value="ENOLASE"/>
    <property type="match status" value="1"/>
</dbReference>
<protein>
    <recommendedName>
        <fullName evidence="1">Enolase</fullName>
        <ecNumber evidence="1">4.2.1.11</ecNumber>
    </recommendedName>
    <alternativeName>
        <fullName evidence="1">2-phospho-D-glycerate hydro-lyase</fullName>
    </alternativeName>
    <alternativeName>
        <fullName evidence="1">2-phosphoglycerate dehydratase</fullName>
    </alternativeName>
</protein>
<feature type="chain" id="PRO_1000115838" description="Enolase">
    <location>
        <begin position="1"/>
        <end position="427"/>
    </location>
</feature>
<feature type="active site" description="Proton donor" evidence="1">
    <location>
        <position position="205"/>
    </location>
</feature>
<feature type="active site" description="Proton acceptor" evidence="1">
    <location>
        <position position="337"/>
    </location>
</feature>
<feature type="binding site" evidence="1">
    <location>
        <position position="163"/>
    </location>
    <ligand>
        <name>(2R)-2-phosphoglycerate</name>
        <dbReference type="ChEBI" id="CHEBI:58289"/>
    </ligand>
</feature>
<feature type="binding site" evidence="1">
    <location>
        <position position="242"/>
    </location>
    <ligand>
        <name>Mg(2+)</name>
        <dbReference type="ChEBI" id="CHEBI:18420"/>
    </ligand>
</feature>
<feature type="binding site" evidence="1">
    <location>
        <position position="285"/>
    </location>
    <ligand>
        <name>Mg(2+)</name>
        <dbReference type="ChEBI" id="CHEBI:18420"/>
    </ligand>
</feature>
<feature type="binding site" evidence="1">
    <location>
        <position position="312"/>
    </location>
    <ligand>
        <name>Mg(2+)</name>
        <dbReference type="ChEBI" id="CHEBI:18420"/>
    </ligand>
</feature>
<feature type="binding site" evidence="1">
    <location>
        <position position="337"/>
    </location>
    <ligand>
        <name>(2R)-2-phosphoglycerate</name>
        <dbReference type="ChEBI" id="CHEBI:58289"/>
    </ligand>
</feature>
<feature type="binding site" evidence="1">
    <location>
        <position position="366"/>
    </location>
    <ligand>
        <name>(2R)-2-phosphoglycerate</name>
        <dbReference type="ChEBI" id="CHEBI:58289"/>
    </ligand>
</feature>
<feature type="binding site" evidence="1">
    <location>
        <position position="367"/>
    </location>
    <ligand>
        <name>(2R)-2-phosphoglycerate</name>
        <dbReference type="ChEBI" id="CHEBI:58289"/>
    </ligand>
</feature>
<feature type="binding site" evidence="1">
    <location>
        <position position="388"/>
    </location>
    <ligand>
        <name>(2R)-2-phosphoglycerate</name>
        <dbReference type="ChEBI" id="CHEBI:58289"/>
    </ligand>
</feature>
<comment type="function">
    <text evidence="1">Catalyzes the reversible conversion of 2-phosphoglycerate (2-PG) into phosphoenolpyruvate (PEP). It is essential for the degradation of carbohydrates via glycolysis.</text>
</comment>
<comment type="catalytic activity">
    <reaction evidence="1">
        <text>(2R)-2-phosphoglycerate = phosphoenolpyruvate + H2O</text>
        <dbReference type="Rhea" id="RHEA:10164"/>
        <dbReference type="ChEBI" id="CHEBI:15377"/>
        <dbReference type="ChEBI" id="CHEBI:58289"/>
        <dbReference type="ChEBI" id="CHEBI:58702"/>
        <dbReference type="EC" id="4.2.1.11"/>
    </reaction>
</comment>
<comment type="cofactor">
    <cofactor evidence="1">
        <name>Mg(2+)</name>
        <dbReference type="ChEBI" id="CHEBI:18420"/>
    </cofactor>
    <text evidence="1">Binds a second Mg(2+) ion via substrate during catalysis.</text>
</comment>
<comment type="pathway">
    <text evidence="1">Carbohydrate degradation; glycolysis; pyruvate from D-glyceraldehyde 3-phosphate: step 4/5.</text>
</comment>
<comment type="subcellular location">
    <subcellularLocation>
        <location evidence="1">Cytoplasm</location>
    </subcellularLocation>
    <subcellularLocation>
        <location evidence="1">Secreted</location>
    </subcellularLocation>
    <subcellularLocation>
        <location evidence="1">Cell surface</location>
    </subcellularLocation>
    <text evidence="1">Fractions of enolase are present in both the cytoplasm and on the cell surface.</text>
</comment>
<comment type="similarity">
    <text evidence="1">Belongs to the enolase family.</text>
</comment>
<reference key="1">
    <citation type="journal article" date="2009" name="J. Bacteriol.">
        <title>The genome of Burkholderia cenocepacia J2315, an epidemic pathogen of cystic fibrosis patients.</title>
        <authorList>
            <person name="Holden M.T."/>
            <person name="Seth-Smith H.M."/>
            <person name="Crossman L.C."/>
            <person name="Sebaihia M."/>
            <person name="Bentley S.D."/>
            <person name="Cerdeno-Tarraga A.M."/>
            <person name="Thomson N.R."/>
            <person name="Bason N."/>
            <person name="Quail M.A."/>
            <person name="Sharp S."/>
            <person name="Cherevach I."/>
            <person name="Churcher C."/>
            <person name="Goodhead I."/>
            <person name="Hauser H."/>
            <person name="Holroyd N."/>
            <person name="Mungall K."/>
            <person name="Scott P."/>
            <person name="Walker D."/>
            <person name="White B."/>
            <person name="Rose H."/>
            <person name="Iversen P."/>
            <person name="Mil-Homens D."/>
            <person name="Rocha E.P."/>
            <person name="Fialho A.M."/>
            <person name="Baldwin A."/>
            <person name="Dowson C."/>
            <person name="Barrell B.G."/>
            <person name="Govan J.R."/>
            <person name="Vandamme P."/>
            <person name="Hart C.A."/>
            <person name="Mahenthiralingam E."/>
            <person name="Parkhill J."/>
        </authorList>
    </citation>
    <scope>NUCLEOTIDE SEQUENCE [LARGE SCALE GENOMIC DNA]</scope>
    <source>
        <strain>ATCC BAA-245 / DSM 16553 / LMG 16656 / NCTC 13227 / J2315 / CF5610</strain>
    </source>
</reference>
<accession>B4EDA1</accession>
<evidence type="ECO:0000255" key="1">
    <source>
        <dbReference type="HAMAP-Rule" id="MF_00318"/>
    </source>
</evidence>